<feature type="chain" id="PRO_0000103173" description="4-hydroxy-tetrahydrodipicolinate synthase">
    <location>
        <begin position="1"/>
        <end position="302"/>
    </location>
</feature>
<feature type="active site" description="Proton donor/acceptor" evidence="1">
    <location>
        <position position="144"/>
    </location>
</feature>
<feature type="active site" description="Schiff-base intermediate with substrate" evidence="1">
    <location>
        <position position="172"/>
    </location>
</feature>
<feature type="binding site" evidence="1">
    <location>
        <position position="55"/>
    </location>
    <ligand>
        <name>pyruvate</name>
        <dbReference type="ChEBI" id="CHEBI:15361"/>
    </ligand>
</feature>
<feature type="binding site" evidence="1">
    <location>
        <position position="214"/>
    </location>
    <ligand>
        <name>pyruvate</name>
        <dbReference type="ChEBI" id="CHEBI:15361"/>
    </ligand>
</feature>
<feature type="site" description="Part of a proton relay during catalysis" evidence="1">
    <location>
        <position position="54"/>
    </location>
</feature>
<feature type="site" description="Part of a proton relay during catalysis" evidence="1">
    <location>
        <position position="117"/>
    </location>
</feature>
<dbReference type="EC" id="4.3.3.7" evidence="1"/>
<dbReference type="EMBL" id="BX569689">
    <property type="protein sequence ID" value="CAE06582.1"/>
    <property type="molecule type" value="Genomic_DNA"/>
</dbReference>
<dbReference type="RefSeq" id="WP_011126945.1">
    <property type="nucleotide sequence ID" value="NC_005070.1"/>
</dbReference>
<dbReference type="SMR" id="Q7UA33"/>
<dbReference type="STRING" id="84588.SYNW0067"/>
<dbReference type="KEGG" id="syw:SYNW0067"/>
<dbReference type="eggNOG" id="COG0329">
    <property type="taxonomic scope" value="Bacteria"/>
</dbReference>
<dbReference type="HOGENOM" id="CLU_049343_7_1_3"/>
<dbReference type="UniPathway" id="UPA00034">
    <property type="reaction ID" value="UER00017"/>
</dbReference>
<dbReference type="Proteomes" id="UP000001422">
    <property type="component" value="Chromosome"/>
</dbReference>
<dbReference type="GO" id="GO:0005829">
    <property type="term" value="C:cytosol"/>
    <property type="evidence" value="ECO:0007669"/>
    <property type="project" value="TreeGrafter"/>
</dbReference>
<dbReference type="GO" id="GO:0008840">
    <property type="term" value="F:4-hydroxy-tetrahydrodipicolinate synthase activity"/>
    <property type="evidence" value="ECO:0007669"/>
    <property type="project" value="UniProtKB-UniRule"/>
</dbReference>
<dbReference type="GO" id="GO:0019877">
    <property type="term" value="P:diaminopimelate biosynthetic process"/>
    <property type="evidence" value="ECO:0007669"/>
    <property type="project" value="UniProtKB-UniRule"/>
</dbReference>
<dbReference type="GO" id="GO:0009089">
    <property type="term" value="P:lysine biosynthetic process via diaminopimelate"/>
    <property type="evidence" value="ECO:0007669"/>
    <property type="project" value="UniProtKB-UniRule"/>
</dbReference>
<dbReference type="CDD" id="cd00950">
    <property type="entry name" value="DHDPS"/>
    <property type="match status" value="1"/>
</dbReference>
<dbReference type="Gene3D" id="3.20.20.70">
    <property type="entry name" value="Aldolase class I"/>
    <property type="match status" value="1"/>
</dbReference>
<dbReference type="HAMAP" id="MF_00418">
    <property type="entry name" value="DapA"/>
    <property type="match status" value="1"/>
</dbReference>
<dbReference type="InterPro" id="IPR013785">
    <property type="entry name" value="Aldolase_TIM"/>
</dbReference>
<dbReference type="InterPro" id="IPR005263">
    <property type="entry name" value="DapA"/>
</dbReference>
<dbReference type="InterPro" id="IPR002220">
    <property type="entry name" value="DapA-like"/>
</dbReference>
<dbReference type="InterPro" id="IPR020625">
    <property type="entry name" value="Schiff_base-form_aldolases_AS"/>
</dbReference>
<dbReference type="InterPro" id="IPR020624">
    <property type="entry name" value="Schiff_base-form_aldolases_CS"/>
</dbReference>
<dbReference type="NCBIfam" id="TIGR00674">
    <property type="entry name" value="dapA"/>
    <property type="match status" value="1"/>
</dbReference>
<dbReference type="PANTHER" id="PTHR12128:SF66">
    <property type="entry name" value="4-HYDROXY-2-OXOGLUTARATE ALDOLASE, MITOCHONDRIAL"/>
    <property type="match status" value="1"/>
</dbReference>
<dbReference type="PANTHER" id="PTHR12128">
    <property type="entry name" value="DIHYDRODIPICOLINATE SYNTHASE"/>
    <property type="match status" value="1"/>
</dbReference>
<dbReference type="Pfam" id="PF00701">
    <property type="entry name" value="DHDPS"/>
    <property type="match status" value="1"/>
</dbReference>
<dbReference type="PIRSF" id="PIRSF001365">
    <property type="entry name" value="DHDPS"/>
    <property type="match status" value="1"/>
</dbReference>
<dbReference type="PRINTS" id="PR00146">
    <property type="entry name" value="DHPICSNTHASE"/>
</dbReference>
<dbReference type="SMART" id="SM01130">
    <property type="entry name" value="DHDPS"/>
    <property type="match status" value="1"/>
</dbReference>
<dbReference type="SUPFAM" id="SSF51569">
    <property type="entry name" value="Aldolase"/>
    <property type="match status" value="1"/>
</dbReference>
<dbReference type="PROSITE" id="PS00665">
    <property type="entry name" value="DHDPS_1"/>
    <property type="match status" value="1"/>
</dbReference>
<dbReference type="PROSITE" id="PS00666">
    <property type="entry name" value="DHDPS_2"/>
    <property type="match status" value="1"/>
</dbReference>
<name>DAPA_PARMW</name>
<gene>
    <name evidence="1" type="primary">dapA</name>
    <name type="ordered locus">SYNW0067</name>
</gene>
<evidence type="ECO:0000255" key="1">
    <source>
        <dbReference type="HAMAP-Rule" id="MF_00418"/>
    </source>
</evidence>
<evidence type="ECO:0000305" key="2"/>
<keyword id="KW-0028">Amino-acid biosynthesis</keyword>
<keyword id="KW-0963">Cytoplasm</keyword>
<keyword id="KW-0220">Diaminopimelate biosynthesis</keyword>
<keyword id="KW-0456">Lyase</keyword>
<keyword id="KW-0457">Lysine biosynthesis</keyword>
<keyword id="KW-0704">Schiff base</keyword>
<proteinExistence type="inferred from homology"/>
<protein>
    <recommendedName>
        <fullName evidence="1">4-hydroxy-tetrahydrodipicolinate synthase</fullName>
        <shortName evidence="1">HTPA synthase</shortName>
        <ecNumber evidence="1">4.3.3.7</ecNumber>
    </recommendedName>
</protein>
<comment type="function">
    <text evidence="1">Catalyzes the condensation of (S)-aspartate-beta-semialdehyde [(S)-ASA] and pyruvate to 4-hydroxy-tetrahydrodipicolinate (HTPA).</text>
</comment>
<comment type="catalytic activity">
    <reaction evidence="1">
        <text>L-aspartate 4-semialdehyde + pyruvate = (2S,4S)-4-hydroxy-2,3,4,5-tetrahydrodipicolinate + H2O + H(+)</text>
        <dbReference type="Rhea" id="RHEA:34171"/>
        <dbReference type="ChEBI" id="CHEBI:15361"/>
        <dbReference type="ChEBI" id="CHEBI:15377"/>
        <dbReference type="ChEBI" id="CHEBI:15378"/>
        <dbReference type="ChEBI" id="CHEBI:67139"/>
        <dbReference type="ChEBI" id="CHEBI:537519"/>
        <dbReference type="EC" id="4.3.3.7"/>
    </reaction>
</comment>
<comment type="pathway">
    <text evidence="1">Amino-acid biosynthesis; L-lysine biosynthesis via DAP pathway; (S)-tetrahydrodipicolinate from L-aspartate: step 3/4.</text>
</comment>
<comment type="subunit">
    <text evidence="1">Homotetramer; dimer of dimers.</text>
</comment>
<comment type="subcellular location">
    <subcellularLocation>
        <location evidence="1">Cytoplasm</location>
    </subcellularLocation>
</comment>
<comment type="similarity">
    <text evidence="1">Belongs to the DapA family.</text>
</comment>
<comment type="caution">
    <text evidence="2">Was originally thought to be a dihydrodipicolinate synthase (DHDPS), catalyzing the condensation of (S)-aspartate-beta-semialdehyde [(S)-ASA] and pyruvate to dihydrodipicolinate (DHDP). However, it was shown in E.coli that the product of the enzymatic reaction is not dihydrodipicolinate but in fact (4S)-4-hydroxy-2,3,4,5-tetrahydro-(2S)-dipicolinic acid (HTPA), and that the consecutive dehydration reaction leading to DHDP is not spontaneous but catalyzed by DapB.</text>
</comment>
<accession>Q7UA33</accession>
<sequence>MTSPAALSPTPFGRVVTAMVTPFDDSGAVDLPLAGRLARHLVEQGSDGLVVSGTTGESPTLSWQEQLQLLQAVREAVGSDAQVLAGTGSNCTAEAVEATRQAAAAGADGALVVVPYYNKPPQDGLAAHFRAIAEAAPELPLMLYNIPGRTGCSMAPETVAQLMDCPNVVSFKAASGTTEEVTALRLACSSKLAIYSGDDGLTLPMISVGAVGVVSVASHVVGPQIRAMIDAYMQGDAAVALALHEQLQPVFKALFATTNPIPVKAALQLNGWSVGDPRPPLSPLPDDMRSTLAQTMAALRQT</sequence>
<organism>
    <name type="scientific">Parasynechococcus marenigrum (strain WH8102)</name>
    <dbReference type="NCBI Taxonomy" id="84588"/>
    <lineage>
        <taxon>Bacteria</taxon>
        <taxon>Bacillati</taxon>
        <taxon>Cyanobacteriota</taxon>
        <taxon>Cyanophyceae</taxon>
        <taxon>Synechococcales</taxon>
        <taxon>Prochlorococcaceae</taxon>
        <taxon>Parasynechococcus</taxon>
        <taxon>Parasynechococcus marenigrum</taxon>
    </lineage>
</organism>
<reference key="1">
    <citation type="journal article" date="2003" name="Nature">
        <title>The genome of a motile marine Synechococcus.</title>
        <authorList>
            <person name="Palenik B."/>
            <person name="Brahamsha B."/>
            <person name="Larimer F.W."/>
            <person name="Land M.L."/>
            <person name="Hauser L."/>
            <person name="Chain P."/>
            <person name="Lamerdin J.E."/>
            <person name="Regala W."/>
            <person name="Allen E.E."/>
            <person name="McCarren J."/>
            <person name="Paulsen I.T."/>
            <person name="Dufresne A."/>
            <person name="Partensky F."/>
            <person name="Webb E.A."/>
            <person name="Waterbury J."/>
        </authorList>
    </citation>
    <scope>NUCLEOTIDE SEQUENCE [LARGE SCALE GENOMIC DNA]</scope>
    <source>
        <strain>WH8102</strain>
    </source>
</reference>